<comment type="subcellular location">
    <subcellularLocation>
        <location>Cell membrane</location>
        <topology>Multi-pass membrane protein</topology>
    </subcellularLocation>
</comment>
<comment type="similarity">
    <text evidence="2">Belongs to the major facilitator superfamily. Sugar transporter (TC 2.A.1.1) family.</text>
</comment>
<name>GLCP_SYNY3</name>
<evidence type="ECO:0000255" key="1"/>
<evidence type="ECO:0000305" key="2"/>
<protein>
    <recommendedName>
        <fullName>Glucose transport protein</fullName>
    </recommendedName>
</protein>
<organism>
    <name type="scientific">Synechocystis sp. (strain ATCC 27184 / PCC 6803 / Kazusa)</name>
    <dbReference type="NCBI Taxonomy" id="1111708"/>
    <lineage>
        <taxon>Bacteria</taxon>
        <taxon>Bacillati</taxon>
        <taxon>Cyanobacteriota</taxon>
        <taxon>Cyanophyceae</taxon>
        <taxon>Synechococcales</taxon>
        <taxon>Merismopediaceae</taxon>
        <taxon>Synechocystis</taxon>
    </lineage>
</organism>
<accession>P15729</accession>
<sequence>MNPSSSPSQSTANVKFVLLISGVAALGGFLFGFDTAVINGAVAALQKHFQTDSLLTGLSVSLALLGSALGAFGAGPIADRHGRIKTMILAAVLFTLSSIGSGLPFTIWDFIFWRVLGGIGVGAASVIAPAYIAEVSPAHLRGRLGSLQQLAIVSGIFIALLSNWFIALMAGGSAQNPWLFGAAAWRWMFWTELIPALLYGVCAFLIPESPRYLVAQGQGEKAAAILWKVEGGDVPSRIEEIQATVSLDHKPRFSDLLSRRGGLLPIVWIGMGLSALQQFVGINVIFYYSSVLWRSVGFTEEKSLLITVITGFINILTTLVAIAFVDKFGRKPLLLMGSIGMTITLGILSVVFGGATVVNGQPTLTGAAGIIALVTANLYVFSFGFSWGPIVWVLLGEMFNNKIRAAALSVAAGVQWIANFIISTTFPPLLDTVGLGPAYGLYATSAAISIFFIWFFVKETKGKTLEQM</sequence>
<keyword id="KW-1003">Cell membrane</keyword>
<keyword id="KW-0472">Membrane</keyword>
<keyword id="KW-1185">Reference proteome</keyword>
<keyword id="KW-0762">Sugar transport</keyword>
<keyword id="KW-0812">Transmembrane</keyword>
<keyword id="KW-1133">Transmembrane helix</keyword>
<keyword id="KW-0813">Transport</keyword>
<dbReference type="EMBL" id="X15988">
    <property type="protein sequence ID" value="CAA34119.1"/>
    <property type="molecule type" value="Genomic_DNA"/>
</dbReference>
<dbReference type="EMBL" id="X16472">
    <property type="protein sequence ID" value="CAA34492.1"/>
    <property type="molecule type" value="Genomic_DNA"/>
</dbReference>
<dbReference type="EMBL" id="BA000022">
    <property type="protein sequence ID" value="BAA10117.1"/>
    <property type="molecule type" value="Genomic_DNA"/>
</dbReference>
<dbReference type="PIR" id="S10014">
    <property type="entry name" value="S10014"/>
</dbReference>
<dbReference type="SMR" id="P15729"/>
<dbReference type="FunCoup" id="P15729">
    <property type="interactions" value="313"/>
</dbReference>
<dbReference type="IntAct" id="P15729">
    <property type="interactions" value="9"/>
</dbReference>
<dbReference type="STRING" id="1148.gene:10499609"/>
<dbReference type="TCDB" id="2.A.1.1.32">
    <property type="family name" value="the major facilitator superfamily (mfs)"/>
</dbReference>
<dbReference type="PaxDb" id="1148-1001492"/>
<dbReference type="EnsemblBacteria" id="BAA10117">
    <property type="protein sequence ID" value="BAA10117"/>
    <property type="gene ID" value="BAA10117"/>
</dbReference>
<dbReference type="KEGG" id="syn:sll0771"/>
<dbReference type="eggNOG" id="COG0477">
    <property type="taxonomic scope" value="Bacteria"/>
</dbReference>
<dbReference type="InParanoid" id="P15729"/>
<dbReference type="PhylomeDB" id="P15729"/>
<dbReference type="Proteomes" id="UP000001425">
    <property type="component" value="Chromosome"/>
</dbReference>
<dbReference type="GO" id="GO:0016020">
    <property type="term" value="C:membrane"/>
    <property type="evidence" value="ECO:0000318"/>
    <property type="project" value="GO_Central"/>
</dbReference>
<dbReference type="GO" id="GO:0005886">
    <property type="term" value="C:plasma membrane"/>
    <property type="evidence" value="ECO:0007669"/>
    <property type="project" value="UniProtKB-SubCell"/>
</dbReference>
<dbReference type="GO" id="GO:0005351">
    <property type="term" value="F:carbohydrate:proton symporter activity"/>
    <property type="evidence" value="ECO:0000318"/>
    <property type="project" value="GO_Central"/>
</dbReference>
<dbReference type="GO" id="GO:0008643">
    <property type="term" value="P:carbohydrate transport"/>
    <property type="evidence" value="ECO:0000318"/>
    <property type="project" value="GO_Central"/>
</dbReference>
<dbReference type="CDD" id="cd17359">
    <property type="entry name" value="MFS_XylE_like"/>
    <property type="match status" value="1"/>
</dbReference>
<dbReference type="FunFam" id="1.20.1250.20:FF:000122">
    <property type="entry name" value="D-xylose transporter XylE"/>
    <property type="match status" value="1"/>
</dbReference>
<dbReference type="Gene3D" id="1.20.1250.20">
    <property type="entry name" value="MFS general substrate transporter like domains"/>
    <property type="match status" value="2"/>
</dbReference>
<dbReference type="InterPro" id="IPR020846">
    <property type="entry name" value="MFS_dom"/>
</dbReference>
<dbReference type="InterPro" id="IPR005828">
    <property type="entry name" value="MFS_sugar_transport-like"/>
</dbReference>
<dbReference type="InterPro" id="IPR036259">
    <property type="entry name" value="MFS_trans_sf"/>
</dbReference>
<dbReference type="InterPro" id="IPR050814">
    <property type="entry name" value="Myo-inositol_Transporter"/>
</dbReference>
<dbReference type="InterPro" id="IPR003663">
    <property type="entry name" value="Sugar/inositol_transpt"/>
</dbReference>
<dbReference type="InterPro" id="IPR005829">
    <property type="entry name" value="Sugar_transporter_CS"/>
</dbReference>
<dbReference type="InterPro" id="IPR047984">
    <property type="entry name" value="XylE-like"/>
</dbReference>
<dbReference type="NCBIfam" id="TIGR00879">
    <property type="entry name" value="SP"/>
    <property type="match status" value="1"/>
</dbReference>
<dbReference type="PANTHER" id="PTHR48020">
    <property type="entry name" value="PROTON MYO-INOSITOL COTRANSPORTER"/>
    <property type="match status" value="1"/>
</dbReference>
<dbReference type="PANTHER" id="PTHR48020:SF12">
    <property type="entry name" value="PROTON MYO-INOSITOL COTRANSPORTER"/>
    <property type="match status" value="1"/>
</dbReference>
<dbReference type="Pfam" id="PF00083">
    <property type="entry name" value="Sugar_tr"/>
    <property type="match status" value="1"/>
</dbReference>
<dbReference type="PRINTS" id="PR00171">
    <property type="entry name" value="SUGRTRNSPORT"/>
</dbReference>
<dbReference type="SUPFAM" id="SSF103473">
    <property type="entry name" value="MFS general substrate transporter"/>
    <property type="match status" value="1"/>
</dbReference>
<dbReference type="PROSITE" id="PS50850">
    <property type="entry name" value="MFS"/>
    <property type="match status" value="1"/>
</dbReference>
<dbReference type="PROSITE" id="PS00216">
    <property type="entry name" value="SUGAR_TRANSPORT_1"/>
    <property type="match status" value="1"/>
</dbReference>
<dbReference type="PROSITE" id="PS00217">
    <property type="entry name" value="SUGAR_TRANSPORT_2"/>
    <property type="match status" value="1"/>
</dbReference>
<gene>
    <name type="primary">gtr</name>
    <name type="synonym">glcP</name>
    <name type="ordered locus">sll0771</name>
</gene>
<reference key="1">
    <citation type="journal article" date="1989" name="Mol. Microbiol.">
        <title>Molecular and genetical analysis of the fructose-glucose transport system in the cyanobacterium Synechocystis PCC6803.</title>
        <authorList>
            <person name="Zhang C.C."/>
            <person name="Durand M.C."/>
            <person name="Jeanjean R."/>
            <person name="Joset F."/>
        </authorList>
    </citation>
    <scope>NUCLEOTIDE SEQUENCE [GENOMIC DNA]</scope>
</reference>
<reference key="2">
    <citation type="journal article" date="1990" name="Plant Mol. Biol.">
        <title>Sequence conservation among the glucose transporter from the cyanobacterium Synechocystis sp. PCC 6803 and mammalian glucose transporters.</title>
        <authorList>
            <person name="Schmetterer G.R."/>
        </authorList>
    </citation>
    <scope>NUCLEOTIDE SEQUENCE [GENOMIC DNA]</scope>
</reference>
<reference key="3">
    <citation type="journal article" date="1995" name="DNA Res.">
        <title>Sequence analysis of the genome of the unicellular cyanobacterium Synechocystis sp. strain PCC6803. I. Sequence features in the 1 Mb region from map positions 64% to 92% of the genome.</title>
        <authorList>
            <person name="Kaneko T."/>
            <person name="Tanaka A."/>
            <person name="Sato S."/>
            <person name="Kotani H."/>
            <person name="Sazuka T."/>
            <person name="Miyajima N."/>
            <person name="Sugiura M."/>
            <person name="Tabata S."/>
        </authorList>
    </citation>
    <scope>NUCLEOTIDE SEQUENCE [LARGE SCALE GENOMIC DNA]</scope>
    <source>
        <strain>ATCC 27184 / PCC 6803 / N-1</strain>
    </source>
</reference>
<reference key="4">
    <citation type="journal article" date="1996" name="DNA Res.">
        <title>Sequence analysis of the genome of the unicellular cyanobacterium Synechocystis sp. strain PCC6803. II. Sequence determination of the entire genome and assignment of potential protein-coding regions.</title>
        <authorList>
            <person name="Kaneko T."/>
            <person name="Sato S."/>
            <person name="Kotani H."/>
            <person name="Tanaka A."/>
            <person name="Asamizu E."/>
            <person name="Nakamura Y."/>
            <person name="Miyajima N."/>
            <person name="Hirosawa M."/>
            <person name="Sugiura M."/>
            <person name="Sasamoto S."/>
            <person name="Kimura T."/>
            <person name="Hosouchi T."/>
            <person name="Matsuno A."/>
            <person name="Muraki A."/>
            <person name="Nakazaki N."/>
            <person name="Naruo K."/>
            <person name="Okumura S."/>
            <person name="Shimpo S."/>
            <person name="Takeuchi C."/>
            <person name="Wada T."/>
            <person name="Watanabe A."/>
            <person name="Yamada M."/>
            <person name="Yasuda M."/>
            <person name="Tabata S."/>
        </authorList>
    </citation>
    <scope>NUCLEOTIDE SEQUENCE [LARGE SCALE GENOMIC DNA]</scope>
    <source>
        <strain>ATCC 27184 / PCC 6803 / Kazusa</strain>
    </source>
</reference>
<feature type="chain" id="PRO_0000050427" description="Glucose transport protein">
    <location>
        <begin position="1"/>
        <end position="468"/>
    </location>
</feature>
<feature type="topological domain" description="Cytoplasmic" evidence="1">
    <location>
        <begin position="1"/>
        <end position="17"/>
    </location>
</feature>
<feature type="transmembrane region" description="Helical; Name=1" evidence="1">
    <location>
        <begin position="18"/>
        <end position="38"/>
    </location>
</feature>
<feature type="topological domain" description="Extracellular" evidence="1">
    <location>
        <begin position="39"/>
        <end position="58"/>
    </location>
</feature>
<feature type="transmembrane region" description="Helical; Name=2" evidence="1">
    <location>
        <begin position="59"/>
        <end position="78"/>
    </location>
</feature>
<feature type="topological domain" description="Cytoplasmic" evidence="1">
    <location>
        <begin position="79"/>
        <end position="84"/>
    </location>
</feature>
<feature type="transmembrane region" description="Helical; Name=3" evidence="1">
    <location>
        <begin position="85"/>
        <end position="105"/>
    </location>
</feature>
<feature type="topological domain" description="Extracellular" evidence="1">
    <location>
        <begin position="106"/>
        <end position="114"/>
    </location>
</feature>
<feature type="transmembrane region" description="Helical; Name=4" evidence="1">
    <location>
        <begin position="115"/>
        <end position="135"/>
    </location>
</feature>
<feature type="topological domain" description="Cytoplasmic" evidence="1">
    <location>
        <begin position="136"/>
        <end position="149"/>
    </location>
</feature>
<feature type="transmembrane region" description="Helical; Name=5" evidence="1">
    <location>
        <begin position="150"/>
        <end position="170"/>
    </location>
</feature>
<feature type="topological domain" description="Extracellular" evidence="1">
    <location>
        <begin position="171"/>
        <end position="186"/>
    </location>
</feature>
<feature type="transmembrane region" description="Helical; Name=6" evidence="1">
    <location>
        <begin position="187"/>
        <end position="207"/>
    </location>
</feature>
<feature type="topological domain" description="Cytoplasmic" evidence="1">
    <location>
        <begin position="208"/>
        <end position="265"/>
    </location>
</feature>
<feature type="transmembrane region" description="Helical; Name=7" evidence="1">
    <location>
        <begin position="266"/>
        <end position="286"/>
    </location>
</feature>
<feature type="topological domain" description="Extracellular" evidence="1">
    <location>
        <begin position="287"/>
        <end position="307"/>
    </location>
</feature>
<feature type="transmembrane region" description="Helical; Name=8" evidence="1">
    <location>
        <begin position="308"/>
        <end position="328"/>
    </location>
</feature>
<feature type="topological domain" description="Cytoplasmic" evidence="1">
    <location>
        <begin position="329"/>
        <end position="331"/>
    </location>
</feature>
<feature type="transmembrane region" description="Helical; Name=9" evidence="1">
    <location>
        <begin position="332"/>
        <end position="352"/>
    </location>
</feature>
<feature type="topological domain" description="Extracellular" evidence="1">
    <location>
        <begin position="353"/>
        <end position="366"/>
    </location>
</feature>
<feature type="transmembrane region" description="Helical; Name=10" evidence="1">
    <location>
        <begin position="367"/>
        <end position="387"/>
    </location>
</feature>
<feature type="topological domain" description="Cytoplasmic" evidence="1">
    <location>
        <begin position="388"/>
        <end position="412"/>
    </location>
</feature>
<feature type="transmembrane region" description="Helical; Name=11" evidence="1">
    <location>
        <begin position="413"/>
        <end position="433"/>
    </location>
</feature>
<feature type="topological domain" description="Extracellular" evidence="1">
    <location>
        <begin position="434"/>
        <end position="436"/>
    </location>
</feature>
<feature type="transmembrane region" description="Helical; Name=12" evidence="1">
    <location>
        <begin position="437"/>
        <end position="457"/>
    </location>
</feature>
<feature type="topological domain" description="Cytoplasmic" evidence="1">
    <location>
        <begin position="458"/>
        <end position="468"/>
    </location>
</feature>
<feature type="sequence conflict" description="In Ref. 1; CAA34119." evidence="2" ref="1">
    <original>L</original>
    <variation>I</variation>
    <location>
        <position position="319"/>
    </location>
</feature>
<proteinExistence type="inferred from homology"/>